<protein>
    <recommendedName>
        <fullName>Putative RING finger protein 095L</fullName>
    </recommendedName>
</protein>
<sequence>MEIIIAFFLYLNDKRKKRFLFKKSKIPLMIITNNDIVMCPIWYNYQVNTVFLPCAHVACYLCSKIIKNCHLCRRKILKTQFFKLP</sequence>
<proteinExistence type="predicted"/>
<organism>
    <name type="scientific">Invertebrate iridescent virus 6</name>
    <name type="common">IIV-6</name>
    <name type="synonym">Chilo iridescent virus</name>
    <dbReference type="NCBI Taxonomy" id="176652"/>
    <lineage>
        <taxon>Viruses</taxon>
        <taxon>Varidnaviria</taxon>
        <taxon>Bamfordvirae</taxon>
        <taxon>Nucleocytoviricota</taxon>
        <taxon>Megaviricetes</taxon>
        <taxon>Pimascovirales</taxon>
        <taxon>Iridoviridae</taxon>
        <taxon>Betairidovirinae</taxon>
        <taxon>Iridovirus</taxon>
    </lineage>
</organism>
<reference key="1">
    <citation type="journal article" date="2001" name="Virology">
        <title>Analysis of the first complete DNA sequence of an invertebrate iridovirus: coding strategy of the genome of Chilo iridescent virus.</title>
        <authorList>
            <person name="Jakob N.J."/>
            <person name="Mueller K."/>
            <person name="Bahr U."/>
            <person name="Darai G."/>
        </authorList>
    </citation>
    <scope>NUCLEOTIDE SEQUENCE [LARGE SCALE GENOMIC DNA]</scope>
</reference>
<reference key="2">
    <citation type="journal article" date="2007" name="Virol. J.">
        <title>Comparative genomic analysis of the family Iridoviridae: re-annotating and defining the core set of iridovirus genes.</title>
        <authorList>
            <person name="Eaton H.E."/>
            <person name="Metcalf J."/>
            <person name="Penny E."/>
            <person name="Tcherepanov V."/>
            <person name="Upton C."/>
            <person name="Brunetti C.R."/>
        </authorList>
    </citation>
    <scope>GENOME REANNOTATION</scope>
</reference>
<organismHost>
    <name type="scientific">Acheta domesticus</name>
    <name type="common">House cricket</name>
    <dbReference type="NCBI Taxonomy" id="6997"/>
</organismHost>
<organismHost>
    <name type="scientific">Chilo suppressalis</name>
    <name type="common">Asiatic rice borer moth</name>
    <dbReference type="NCBI Taxonomy" id="168631"/>
</organismHost>
<organismHost>
    <name type="scientific">Gryllus bimaculatus</name>
    <name type="common">Two-spotted cricket</name>
    <dbReference type="NCBI Taxonomy" id="6999"/>
</organismHost>
<organismHost>
    <name type="scientific">Gryllus campestris</name>
    <dbReference type="NCBI Taxonomy" id="58607"/>
</organismHost>
<organismHost>
    <name type="scientific">Spodoptera frugiperda</name>
    <name type="common">Fall armyworm</name>
    <dbReference type="NCBI Taxonomy" id="7108"/>
</organismHost>
<accession>O55718</accession>
<gene>
    <name type="ORF">IIV6-095L</name>
</gene>
<name>095L_IIV6</name>
<keyword id="KW-0479">Metal-binding</keyword>
<keyword id="KW-1185">Reference proteome</keyword>
<keyword id="KW-0862">Zinc</keyword>
<keyword id="KW-0863">Zinc-finger</keyword>
<feature type="chain" id="PRO_0000377905" description="Putative RING finger protein 095L">
    <location>
        <begin position="1"/>
        <end position="85"/>
    </location>
</feature>
<feature type="zinc finger region" description="RING-type; degenerate">
    <location>
        <begin position="39"/>
        <end position="73"/>
    </location>
</feature>
<dbReference type="EMBL" id="AF303741">
    <property type="protein sequence ID" value="AAB94429.1"/>
    <property type="molecule type" value="Genomic_DNA"/>
</dbReference>
<dbReference type="PIR" id="T03055">
    <property type="entry name" value="T03055"/>
</dbReference>
<dbReference type="RefSeq" id="NP_149558.1">
    <property type="nucleotide sequence ID" value="NC_003038.1"/>
</dbReference>
<dbReference type="SMR" id="O55718"/>
<dbReference type="KEGG" id="vg:1733048"/>
<dbReference type="Proteomes" id="UP000001359">
    <property type="component" value="Genome"/>
</dbReference>
<dbReference type="GO" id="GO:0008270">
    <property type="term" value="F:zinc ion binding"/>
    <property type="evidence" value="ECO:0007669"/>
    <property type="project" value="UniProtKB-KW"/>
</dbReference>
<dbReference type="Gene3D" id="3.30.40.10">
    <property type="entry name" value="Zinc/RING finger domain, C3HC4 (zinc finger)"/>
    <property type="match status" value="1"/>
</dbReference>
<dbReference type="InterPro" id="IPR013083">
    <property type="entry name" value="Znf_RING/FYVE/PHD"/>
</dbReference>
<dbReference type="Pfam" id="PF13920">
    <property type="entry name" value="zf-C3HC4_3"/>
    <property type="match status" value="1"/>
</dbReference>
<dbReference type="SUPFAM" id="SSF57850">
    <property type="entry name" value="RING/U-box"/>
    <property type="match status" value="1"/>
</dbReference>